<gene>
    <name evidence="1" type="primary">ruvB</name>
    <name type="ordered locus">Amet_2339</name>
</gene>
<protein>
    <recommendedName>
        <fullName evidence="1">Holliday junction branch migration complex subunit RuvB</fullName>
        <ecNumber evidence="1">3.6.4.-</ecNumber>
    </recommendedName>
</protein>
<organism>
    <name type="scientific">Alkaliphilus metalliredigens (strain QYMF)</name>
    <dbReference type="NCBI Taxonomy" id="293826"/>
    <lineage>
        <taxon>Bacteria</taxon>
        <taxon>Bacillati</taxon>
        <taxon>Bacillota</taxon>
        <taxon>Clostridia</taxon>
        <taxon>Peptostreptococcales</taxon>
        <taxon>Natronincolaceae</taxon>
        <taxon>Alkaliphilus</taxon>
    </lineage>
</organism>
<reference key="1">
    <citation type="journal article" date="2016" name="Genome Announc.">
        <title>Complete genome sequence of Alkaliphilus metalliredigens strain QYMF, an alkaliphilic and metal-reducing bacterium isolated from borax-contaminated leachate ponds.</title>
        <authorList>
            <person name="Hwang C."/>
            <person name="Copeland A."/>
            <person name="Lucas S."/>
            <person name="Lapidus A."/>
            <person name="Barry K."/>
            <person name="Detter J.C."/>
            <person name="Glavina Del Rio T."/>
            <person name="Hammon N."/>
            <person name="Israni S."/>
            <person name="Dalin E."/>
            <person name="Tice H."/>
            <person name="Pitluck S."/>
            <person name="Chertkov O."/>
            <person name="Brettin T."/>
            <person name="Bruce D."/>
            <person name="Han C."/>
            <person name="Schmutz J."/>
            <person name="Larimer F."/>
            <person name="Land M.L."/>
            <person name="Hauser L."/>
            <person name="Kyrpides N."/>
            <person name="Mikhailova N."/>
            <person name="Ye Q."/>
            <person name="Zhou J."/>
            <person name="Richardson P."/>
            <person name="Fields M.W."/>
        </authorList>
    </citation>
    <scope>NUCLEOTIDE SEQUENCE [LARGE SCALE GENOMIC DNA]</scope>
    <source>
        <strain>QYMF</strain>
    </source>
</reference>
<sequence length="336" mass="37723">MQDQEEERMITNQPKEEDLILENGLRPKFLVDYIGQNSVKERLKIFIEAAKQRQEPLDHVLLYGPPGLGKTTLANIIANEMNVNIKITSGPAIERPGDLAAILTNLAANDVLFIDEIHRLNRTVEEVLYPAMEDFALDIIIGKGPSARSIRLDLSQFTLIGATTRAGQLSSPLRDRFGVICKLELYNNKQLTAIVKRSARILDAYIDDEGATEIASRSRGTPRIANRLLRRVRDYAQVKSDGRITKRVAEEALILLEVDSLGLDNTDKKMIETMIYNFNGGPVGLDTLAATTGEERNTIEDVYEPYLLQMGFINRTPRGRIVMQKAYEHFNIPSAE</sequence>
<comment type="function">
    <text evidence="1">The RuvA-RuvB-RuvC complex processes Holliday junction (HJ) DNA during genetic recombination and DNA repair, while the RuvA-RuvB complex plays an important role in the rescue of blocked DNA replication forks via replication fork reversal (RFR). RuvA specifically binds to HJ cruciform DNA, conferring on it an open structure. The RuvB hexamer acts as an ATP-dependent pump, pulling dsDNA into and through the RuvAB complex. RuvB forms 2 homohexamers on either side of HJ DNA bound by 1 or 2 RuvA tetramers; 4 subunits per hexamer contact DNA at a time. Coordinated motions by a converter formed by DNA-disengaged RuvB subunits stimulates ATP hydrolysis and nucleotide exchange. Immobilization of the converter enables RuvB to convert the ATP-contained energy into a lever motion, pulling 2 nucleotides of DNA out of the RuvA tetramer per ATP hydrolyzed, thus driving DNA branch migration. The RuvB motors rotate together with the DNA substrate, which together with the progressing nucleotide cycle form the mechanistic basis for DNA recombination by continuous HJ branch migration. Branch migration allows RuvC to scan DNA until it finds its consensus sequence, where it cleaves and resolves cruciform DNA.</text>
</comment>
<comment type="catalytic activity">
    <reaction evidence="1">
        <text>ATP + H2O = ADP + phosphate + H(+)</text>
        <dbReference type="Rhea" id="RHEA:13065"/>
        <dbReference type="ChEBI" id="CHEBI:15377"/>
        <dbReference type="ChEBI" id="CHEBI:15378"/>
        <dbReference type="ChEBI" id="CHEBI:30616"/>
        <dbReference type="ChEBI" id="CHEBI:43474"/>
        <dbReference type="ChEBI" id="CHEBI:456216"/>
    </reaction>
</comment>
<comment type="subunit">
    <text evidence="1">Homohexamer. Forms an RuvA(8)-RuvB(12)-Holliday junction (HJ) complex. HJ DNA is sandwiched between 2 RuvA tetramers; dsDNA enters through RuvA and exits via RuvB. An RuvB hexamer assembles on each DNA strand where it exits the tetramer. Each RuvB hexamer is contacted by two RuvA subunits (via domain III) on 2 adjacent RuvB subunits; this complex drives branch migration. In the full resolvosome a probable DNA-RuvA(4)-RuvB(12)-RuvC(2) complex forms which resolves the HJ.</text>
</comment>
<comment type="subcellular location">
    <subcellularLocation>
        <location evidence="1">Cytoplasm</location>
    </subcellularLocation>
</comment>
<comment type="domain">
    <text evidence="1">Has 3 domains, the large (RuvB-L) and small ATPase (RuvB-S) domains and the C-terminal head (RuvB-H) domain. The head domain binds DNA, while the ATPase domains jointly bind ATP, ADP or are empty depending on the state of the subunit in the translocation cycle. During a single DNA translocation step the structure of each domain remains the same, but their relative positions change.</text>
</comment>
<comment type="similarity">
    <text evidence="1">Belongs to the RuvB family.</text>
</comment>
<feature type="chain" id="PRO_0000322779" description="Holliday junction branch migration complex subunit RuvB">
    <location>
        <begin position="1"/>
        <end position="336"/>
    </location>
</feature>
<feature type="region of interest" description="Large ATPase domain (RuvB-L)" evidence="1">
    <location>
        <begin position="2"/>
        <end position="186"/>
    </location>
</feature>
<feature type="region of interest" description="Small ATPAse domain (RuvB-S)" evidence="1">
    <location>
        <begin position="187"/>
        <end position="257"/>
    </location>
</feature>
<feature type="region of interest" description="Head domain (RuvB-H)" evidence="1">
    <location>
        <begin position="260"/>
        <end position="336"/>
    </location>
</feature>
<feature type="binding site" evidence="1">
    <location>
        <position position="25"/>
    </location>
    <ligand>
        <name>ATP</name>
        <dbReference type="ChEBI" id="CHEBI:30616"/>
    </ligand>
</feature>
<feature type="binding site" evidence="1">
    <location>
        <position position="26"/>
    </location>
    <ligand>
        <name>ATP</name>
        <dbReference type="ChEBI" id="CHEBI:30616"/>
    </ligand>
</feature>
<feature type="binding site" evidence="1">
    <location>
        <position position="67"/>
    </location>
    <ligand>
        <name>ATP</name>
        <dbReference type="ChEBI" id="CHEBI:30616"/>
    </ligand>
</feature>
<feature type="binding site" evidence="1">
    <location>
        <position position="70"/>
    </location>
    <ligand>
        <name>ATP</name>
        <dbReference type="ChEBI" id="CHEBI:30616"/>
    </ligand>
</feature>
<feature type="binding site" evidence="1">
    <location>
        <position position="71"/>
    </location>
    <ligand>
        <name>ATP</name>
        <dbReference type="ChEBI" id="CHEBI:30616"/>
    </ligand>
</feature>
<feature type="binding site" evidence="1">
    <location>
        <position position="71"/>
    </location>
    <ligand>
        <name>Mg(2+)</name>
        <dbReference type="ChEBI" id="CHEBI:18420"/>
    </ligand>
</feature>
<feature type="binding site" evidence="1">
    <location>
        <position position="72"/>
    </location>
    <ligand>
        <name>ATP</name>
        <dbReference type="ChEBI" id="CHEBI:30616"/>
    </ligand>
</feature>
<feature type="binding site" evidence="1">
    <location>
        <begin position="133"/>
        <end position="135"/>
    </location>
    <ligand>
        <name>ATP</name>
        <dbReference type="ChEBI" id="CHEBI:30616"/>
    </ligand>
</feature>
<feature type="binding site" evidence="1">
    <location>
        <position position="176"/>
    </location>
    <ligand>
        <name>ATP</name>
        <dbReference type="ChEBI" id="CHEBI:30616"/>
    </ligand>
</feature>
<feature type="binding site" evidence="1">
    <location>
        <position position="186"/>
    </location>
    <ligand>
        <name>ATP</name>
        <dbReference type="ChEBI" id="CHEBI:30616"/>
    </ligand>
</feature>
<feature type="binding site" evidence="1">
    <location>
        <position position="223"/>
    </location>
    <ligand>
        <name>ATP</name>
        <dbReference type="ChEBI" id="CHEBI:30616"/>
    </ligand>
</feature>
<feature type="binding site" evidence="1">
    <location>
        <position position="296"/>
    </location>
    <ligand>
        <name>DNA</name>
        <dbReference type="ChEBI" id="CHEBI:16991"/>
    </ligand>
</feature>
<feature type="binding site" evidence="1">
    <location>
        <position position="315"/>
    </location>
    <ligand>
        <name>DNA</name>
        <dbReference type="ChEBI" id="CHEBI:16991"/>
    </ligand>
</feature>
<feature type="binding site" evidence="1">
    <location>
        <position position="320"/>
    </location>
    <ligand>
        <name>DNA</name>
        <dbReference type="ChEBI" id="CHEBI:16991"/>
    </ligand>
</feature>
<dbReference type="EC" id="3.6.4.-" evidence="1"/>
<dbReference type="EMBL" id="CP000724">
    <property type="protein sequence ID" value="ABR48493.1"/>
    <property type="molecule type" value="Genomic_DNA"/>
</dbReference>
<dbReference type="RefSeq" id="WP_012063468.1">
    <property type="nucleotide sequence ID" value="NC_009633.1"/>
</dbReference>
<dbReference type="SMR" id="A6TQM5"/>
<dbReference type="STRING" id="293826.Amet_2339"/>
<dbReference type="KEGG" id="amt:Amet_2339"/>
<dbReference type="eggNOG" id="COG2255">
    <property type="taxonomic scope" value="Bacteria"/>
</dbReference>
<dbReference type="HOGENOM" id="CLU_055599_1_0_9"/>
<dbReference type="OrthoDB" id="9804478at2"/>
<dbReference type="Proteomes" id="UP000001572">
    <property type="component" value="Chromosome"/>
</dbReference>
<dbReference type="GO" id="GO:0005737">
    <property type="term" value="C:cytoplasm"/>
    <property type="evidence" value="ECO:0007669"/>
    <property type="project" value="UniProtKB-SubCell"/>
</dbReference>
<dbReference type="GO" id="GO:0048476">
    <property type="term" value="C:Holliday junction resolvase complex"/>
    <property type="evidence" value="ECO:0007669"/>
    <property type="project" value="UniProtKB-UniRule"/>
</dbReference>
<dbReference type="GO" id="GO:0005524">
    <property type="term" value="F:ATP binding"/>
    <property type="evidence" value="ECO:0007669"/>
    <property type="project" value="UniProtKB-UniRule"/>
</dbReference>
<dbReference type="GO" id="GO:0016887">
    <property type="term" value="F:ATP hydrolysis activity"/>
    <property type="evidence" value="ECO:0007669"/>
    <property type="project" value="InterPro"/>
</dbReference>
<dbReference type="GO" id="GO:0000400">
    <property type="term" value="F:four-way junction DNA binding"/>
    <property type="evidence" value="ECO:0007669"/>
    <property type="project" value="UniProtKB-UniRule"/>
</dbReference>
<dbReference type="GO" id="GO:0009378">
    <property type="term" value="F:four-way junction helicase activity"/>
    <property type="evidence" value="ECO:0007669"/>
    <property type="project" value="InterPro"/>
</dbReference>
<dbReference type="GO" id="GO:0006310">
    <property type="term" value="P:DNA recombination"/>
    <property type="evidence" value="ECO:0007669"/>
    <property type="project" value="UniProtKB-UniRule"/>
</dbReference>
<dbReference type="GO" id="GO:0006281">
    <property type="term" value="P:DNA repair"/>
    <property type="evidence" value="ECO:0007669"/>
    <property type="project" value="UniProtKB-UniRule"/>
</dbReference>
<dbReference type="CDD" id="cd00009">
    <property type="entry name" value="AAA"/>
    <property type="match status" value="1"/>
</dbReference>
<dbReference type="FunFam" id="1.10.8.60:FF:000023">
    <property type="entry name" value="Holliday junction ATP-dependent DNA helicase RuvB"/>
    <property type="match status" value="1"/>
</dbReference>
<dbReference type="Gene3D" id="1.10.8.60">
    <property type="match status" value="1"/>
</dbReference>
<dbReference type="Gene3D" id="3.40.50.300">
    <property type="entry name" value="P-loop containing nucleotide triphosphate hydrolases"/>
    <property type="match status" value="1"/>
</dbReference>
<dbReference type="Gene3D" id="1.10.10.10">
    <property type="entry name" value="Winged helix-like DNA-binding domain superfamily/Winged helix DNA-binding domain"/>
    <property type="match status" value="1"/>
</dbReference>
<dbReference type="HAMAP" id="MF_00016">
    <property type="entry name" value="DNA_HJ_migration_RuvB"/>
    <property type="match status" value="1"/>
</dbReference>
<dbReference type="InterPro" id="IPR003593">
    <property type="entry name" value="AAA+_ATPase"/>
</dbReference>
<dbReference type="InterPro" id="IPR041445">
    <property type="entry name" value="AAA_lid_4"/>
</dbReference>
<dbReference type="InterPro" id="IPR004605">
    <property type="entry name" value="DNA_helicase_Holl-junc_RuvB"/>
</dbReference>
<dbReference type="InterPro" id="IPR027417">
    <property type="entry name" value="P-loop_NTPase"/>
</dbReference>
<dbReference type="InterPro" id="IPR008824">
    <property type="entry name" value="RuvB-like_N"/>
</dbReference>
<dbReference type="InterPro" id="IPR008823">
    <property type="entry name" value="RuvB_C"/>
</dbReference>
<dbReference type="InterPro" id="IPR036388">
    <property type="entry name" value="WH-like_DNA-bd_sf"/>
</dbReference>
<dbReference type="InterPro" id="IPR036390">
    <property type="entry name" value="WH_DNA-bd_sf"/>
</dbReference>
<dbReference type="NCBIfam" id="NF000868">
    <property type="entry name" value="PRK00080.1"/>
    <property type="match status" value="1"/>
</dbReference>
<dbReference type="NCBIfam" id="TIGR00635">
    <property type="entry name" value="ruvB"/>
    <property type="match status" value="1"/>
</dbReference>
<dbReference type="PANTHER" id="PTHR42848">
    <property type="match status" value="1"/>
</dbReference>
<dbReference type="PANTHER" id="PTHR42848:SF1">
    <property type="entry name" value="HOLLIDAY JUNCTION BRANCH MIGRATION COMPLEX SUBUNIT RUVB"/>
    <property type="match status" value="1"/>
</dbReference>
<dbReference type="Pfam" id="PF17864">
    <property type="entry name" value="AAA_lid_4"/>
    <property type="match status" value="1"/>
</dbReference>
<dbReference type="Pfam" id="PF05491">
    <property type="entry name" value="RuvB_C"/>
    <property type="match status" value="1"/>
</dbReference>
<dbReference type="Pfam" id="PF05496">
    <property type="entry name" value="RuvB_N"/>
    <property type="match status" value="1"/>
</dbReference>
<dbReference type="SMART" id="SM00382">
    <property type="entry name" value="AAA"/>
    <property type="match status" value="1"/>
</dbReference>
<dbReference type="SUPFAM" id="SSF52540">
    <property type="entry name" value="P-loop containing nucleoside triphosphate hydrolases"/>
    <property type="match status" value="1"/>
</dbReference>
<dbReference type="SUPFAM" id="SSF46785">
    <property type="entry name" value="Winged helix' DNA-binding domain"/>
    <property type="match status" value="1"/>
</dbReference>
<keyword id="KW-0067">ATP-binding</keyword>
<keyword id="KW-0963">Cytoplasm</keyword>
<keyword id="KW-0227">DNA damage</keyword>
<keyword id="KW-0233">DNA recombination</keyword>
<keyword id="KW-0234">DNA repair</keyword>
<keyword id="KW-0238">DNA-binding</keyword>
<keyword id="KW-0378">Hydrolase</keyword>
<keyword id="KW-0547">Nucleotide-binding</keyword>
<keyword id="KW-1185">Reference proteome</keyword>
<name>RUVB_ALKMQ</name>
<evidence type="ECO:0000255" key="1">
    <source>
        <dbReference type="HAMAP-Rule" id="MF_00016"/>
    </source>
</evidence>
<accession>A6TQM5</accession>
<proteinExistence type="inferred from homology"/>